<feature type="chain" id="PRO_0000206381" description="3-ketoacyl-CoA thiolase">
    <location>
        <begin position="1"/>
        <end position="391"/>
    </location>
</feature>
<feature type="active site" description="Acyl-thioester intermediate" evidence="1">
    <location>
        <position position="95"/>
    </location>
</feature>
<feature type="active site" description="Proton acceptor" evidence="1">
    <location>
        <position position="347"/>
    </location>
</feature>
<feature type="active site" description="Proton acceptor" evidence="1">
    <location>
        <position position="377"/>
    </location>
</feature>
<name>FADA_ECTOL</name>
<proteinExistence type="inferred from homology"/>
<reference key="1">
    <citation type="journal article" date="2002" name="Arch. Microbiol.">
        <title>The role of the fatty acid beta-oxidation multienzyme complex from Pseudomonas oleovorans in polyhydroxyalkanoate biosynthesis: molecular characterization of the fadBA operon from P. oleovorans and of the enoyl-CoA hydratase genes phaJ from P. oleovorans and Pseudomonas putida.</title>
        <authorList>
            <person name="Fiedler S."/>
            <person name="Steinbuchel A."/>
            <person name="Rehm B.H."/>
        </authorList>
    </citation>
    <scope>NUCLEOTIDE SEQUENCE [GENOMIC DNA]</scope>
    <source>
        <strain>ATCC 29347 / CIP 105816 / NRRL B-14683 / TF4-1L</strain>
    </source>
</reference>
<evidence type="ECO:0000255" key="1">
    <source>
        <dbReference type="HAMAP-Rule" id="MF_01620"/>
    </source>
</evidence>
<sequence length="391" mass="41645">MSLNPRDVVIVDFGRTPMGRSKGGMHRNTRAEDMSAHLISKLLERNDKVDPKEVEDVIWGCVNQTLEQGWNIARMASLMTQIPHTSAAQTVSRLCGSSMSALHTAAQAIMTGNGDVFVVGGVEHMGHVSMMHGVDPNPHLSLHAAKASGMMGLTAEMLGKMHGITREQQDLFGLRSHQLAHKATVEGKFKDEIIPMQGYDENGFLKVFDFDETIRPETTLEGLASLKPAFNPKGGTVTAGTSSQITDGASCMVVMSGQRAMDLGIQPLAVIRSMAVAGVDPAIMGYGPVPSTQKALKRAGLTMADIDFIELNEAFAAQALPVLKDLKVLDKMDEKVNLHGGAIALGHPFGCSGARISGTLLNVMKQNGGTLGVATMCVGLGQGITTVFERI</sequence>
<dbReference type="EC" id="2.3.1.16" evidence="1"/>
<dbReference type="EMBL" id="AF288535">
    <property type="protein sequence ID" value="AAK83059.1"/>
    <property type="molecule type" value="Genomic_DNA"/>
</dbReference>
<dbReference type="SMR" id="Q93Q11"/>
<dbReference type="STRING" id="301.SAMN05216280_100823"/>
<dbReference type="eggNOG" id="COG0183">
    <property type="taxonomic scope" value="Bacteria"/>
</dbReference>
<dbReference type="UniPathway" id="UPA00659"/>
<dbReference type="GO" id="GO:0005737">
    <property type="term" value="C:cytoplasm"/>
    <property type="evidence" value="ECO:0007669"/>
    <property type="project" value="UniProtKB-SubCell"/>
</dbReference>
<dbReference type="GO" id="GO:0003988">
    <property type="term" value="F:acetyl-CoA C-acyltransferase activity"/>
    <property type="evidence" value="ECO:0007669"/>
    <property type="project" value="UniProtKB-UniRule"/>
</dbReference>
<dbReference type="GO" id="GO:0006635">
    <property type="term" value="P:fatty acid beta-oxidation"/>
    <property type="evidence" value="ECO:0007669"/>
    <property type="project" value="UniProtKB-UniRule"/>
</dbReference>
<dbReference type="GO" id="GO:0010124">
    <property type="term" value="P:phenylacetate catabolic process"/>
    <property type="evidence" value="ECO:0007669"/>
    <property type="project" value="TreeGrafter"/>
</dbReference>
<dbReference type="CDD" id="cd00751">
    <property type="entry name" value="thiolase"/>
    <property type="match status" value="1"/>
</dbReference>
<dbReference type="FunFam" id="3.40.47.10:FF:000010">
    <property type="entry name" value="Acetyl-CoA acetyltransferase (Thiolase)"/>
    <property type="match status" value="1"/>
</dbReference>
<dbReference type="Gene3D" id="3.40.47.10">
    <property type="match status" value="2"/>
</dbReference>
<dbReference type="HAMAP" id="MF_01620">
    <property type="entry name" value="FadA"/>
    <property type="match status" value="1"/>
</dbReference>
<dbReference type="InterPro" id="IPR012805">
    <property type="entry name" value="FadA"/>
</dbReference>
<dbReference type="InterPro" id="IPR002155">
    <property type="entry name" value="Thiolase"/>
</dbReference>
<dbReference type="InterPro" id="IPR016039">
    <property type="entry name" value="Thiolase-like"/>
</dbReference>
<dbReference type="InterPro" id="IPR050215">
    <property type="entry name" value="Thiolase-like_sf_Thiolase"/>
</dbReference>
<dbReference type="InterPro" id="IPR020615">
    <property type="entry name" value="Thiolase_acyl_enz_int_AS"/>
</dbReference>
<dbReference type="InterPro" id="IPR020617">
    <property type="entry name" value="Thiolase_C"/>
</dbReference>
<dbReference type="InterPro" id="IPR020613">
    <property type="entry name" value="Thiolase_CS"/>
</dbReference>
<dbReference type="InterPro" id="IPR020616">
    <property type="entry name" value="Thiolase_N"/>
</dbReference>
<dbReference type="NCBIfam" id="TIGR01930">
    <property type="entry name" value="AcCoA-C-Actrans"/>
    <property type="match status" value="1"/>
</dbReference>
<dbReference type="NCBIfam" id="TIGR02445">
    <property type="entry name" value="fadA"/>
    <property type="match status" value="1"/>
</dbReference>
<dbReference type="NCBIfam" id="NF006510">
    <property type="entry name" value="PRK08947.1"/>
    <property type="match status" value="1"/>
</dbReference>
<dbReference type="PANTHER" id="PTHR43853:SF11">
    <property type="entry name" value="3-KETOACYL-COA THIOLASE FADA"/>
    <property type="match status" value="1"/>
</dbReference>
<dbReference type="PANTHER" id="PTHR43853">
    <property type="entry name" value="3-KETOACYL-COA THIOLASE, PEROXISOMAL"/>
    <property type="match status" value="1"/>
</dbReference>
<dbReference type="Pfam" id="PF02803">
    <property type="entry name" value="Thiolase_C"/>
    <property type="match status" value="1"/>
</dbReference>
<dbReference type="Pfam" id="PF00108">
    <property type="entry name" value="Thiolase_N"/>
    <property type="match status" value="1"/>
</dbReference>
<dbReference type="PIRSF" id="PIRSF000429">
    <property type="entry name" value="Ac-CoA_Ac_transf"/>
    <property type="match status" value="1"/>
</dbReference>
<dbReference type="SUPFAM" id="SSF53901">
    <property type="entry name" value="Thiolase-like"/>
    <property type="match status" value="2"/>
</dbReference>
<dbReference type="PROSITE" id="PS00098">
    <property type="entry name" value="THIOLASE_1"/>
    <property type="match status" value="1"/>
</dbReference>
<dbReference type="PROSITE" id="PS00737">
    <property type="entry name" value="THIOLASE_2"/>
    <property type="match status" value="1"/>
</dbReference>
<comment type="function">
    <text evidence="1">Catalyzes the final step of fatty acid oxidation in which acetyl-CoA is released and the CoA ester of a fatty acid two carbons shorter is formed.</text>
</comment>
<comment type="catalytic activity">
    <reaction evidence="1">
        <text>an acyl-CoA + acetyl-CoA = a 3-oxoacyl-CoA + CoA</text>
        <dbReference type="Rhea" id="RHEA:21564"/>
        <dbReference type="ChEBI" id="CHEBI:57287"/>
        <dbReference type="ChEBI" id="CHEBI:57288"/>
        <dbReference type="ChEBI" id="CHEBI:58342"/>
        <dbReference type="ChEBI" id="CHEBI:90726"/>
        <dbReference type="EC" id="2.3.1.16"/>
    </reaction>
</comment>
<comment type="pathway">
    <text evidence="1">Lipid metabolism; fatty acid beta-oxidation.</text>
</comment>
<comment type="subunit">
    <text evidence="1">Heterotetramer of two alpha chains (FadB) and two beta chains (FadA).</text>
</comment>
<comment type="subcellular location">
    <subcellularLocation>
        <location evidence="1">Cytoplasm</location>
    </subcellularLocation>
</comment>
<comment type="similarity">
    <text evidence="1">Belongs to the thiolase-like superfamily. Thiolase family.</text>
</comment>
<keyword id="KW-0012">Acyltransferase</keyword>
<keyword id="KW-0963">Cytoplasm</keyword>
<keyword id="KW-0276">Fatty acid metabolism</keyword>
<keyword id="KW-0442">Lipid degradation</keyword>
<keyword id="KW-0443">Lipid metabolism</keyword>
<keyword id="KW-0808">Transferase</keyword>
<organism>
    <name type="scientific">Ectopseudomonas oleovorans</name>
    <name type="common">Pseudomonas oleovorans</name>
    <dbReference type="NCBI Taxonomy" id="301"/>
    <lineage>
        <taxon>Bacteria</taxon>
        <taxon>Pseudomonadati</taxon>
        <taxon>Pseudomonadota</taxon>
        <taxon>Gammaproteobacteria</taxon>
        <taxon>Pseudomonadales</taxon>
        <taxon>Pseudomonadaceae</taxon>
        <taxon>Ectopseudomonas</taxon>
    </lineage>
</organism>
<protein>
    <recommendedName>
        <fullName evidence="1">3-ketoacyl-CoA thiolase</fullName>
        <ecNumber evidence="1">2.3.1.16</ecNumber>
    </recommendedName>
    <alternativeName>
        <fullName evidence="1">Acetyl-CoA acyltransferase</fullName>
    </alternativeName>
    <alternativeName>
        <fullName evidence="1">Beta-ketothiolase</fullName>
    </alternativeName>
    <alternativeName>
        <fullName evidence="1">Fatty acid oxidation complex subunit beta</fullName>
    </alternativeName>
</protein>
<accession>Q93Q11</accession>
<gene>
    <name evidence="1" type="primary">fadA</name>
</gene>